<accession>Q9CKD8</accession>
<dbReference type="EMBL" id="AE004439">
    <property type="protein sequence ID" value="AAK03768.1"/>
    <property type="molecule type" value="Genomic_DNA"/>
</dbReference>
<dbReference type="RefSeq" id="WP_010907287.1">
    <property type="nucleotide sequence ID" value="NC_002663.1"/>
</dbReference>
<dbReference type="SMR" id="Q9CKD8"/>
<dbReference type="STRING" id="272843.PM1684"/>
<dbReference type="EnsemblBacteria" id="AAK03768">
    <property type="protein sequence ID" value="AAK03768"/>
    <property type="gene ID" value="PM1684"/>
</dbReference>
<dbReference type="KEGG" id="pmu:PM1684"/>
<dbReference type="PATRIC" id="fig|272843.6.peg.1704"/>
<dbReference type="HOGENOM" id="CLU_015803_1_0_6"/>
<dbReference type="OrthoDB" id="9808135at2"/>
<dbReference type="Proteomes" id="UP000000809">
    <property type="component" value="Chromosome"/>
</dbReference>
<dbReference type="GO" id="GO:0005886">
    <property type="term" value="C:plasma membrane"/>
    <property type="evidence" value="ECO:0007669"/>
    <property type="project" value="UniProtKB-SubCell"/>
</dbReference>
<dbReference type="GO" id="GO:0015385">
    <property type="term" value="F:sodium:proton antiporter activity"/>
    <property type="evidence" value="ECO:0007669"/>
    <property type="project" value="TreeGrafter"/>
</dbReference>
<dbReference type="GO" id="GO:0006885">
    <property type="term" value="P:regulation of pH"/>
    <property type="evidence" value="ECO:0007669"/>
    <property type="project" value="InterPro"/>
</dbReference>
<dbReference type="Gene3D" id="1.20.1530.10">
    <property type="entry name" value="Na+/H+ antiporter like domain"/>
    <property type="match status" value="1"/>
</dbReference>
<dbReference type="HAMAP" id="MF_01844">
    <property type="entry name" value="NhaA"/>
    <property type="match status" value="1"/>
</dbReference>
<dbReference type="InterPro" id="IPR023171">
    <property type="entry name" value="Na/H_antiporter_dom_sf"/>
</dbReference>
<dbReference type="InterPro" id="IPR004670">
    <property type="entry name" value="NhaA"/>
</dbReference>
<dbReference type="NCBIfam" id="TIGR00773">
    <property type="entry name" value="NhaA"/>
    <property type="match status" value="1"/>
</dbReference>
<dbReference type="NCBIfam" id="NF007111">
    <property type="entry name" value="PRK09560.1"/>
    <property type="match status" value="1"/>
</dbReference>
<dbReference type="NCBIfam" id="NF007112">
    <property type="entry name" value="PRK09561.1"/>
    <property type="match status" value="1"/>
</dbReference>
<dbReference type="PANTHER" id="PTHR30341:SF0">
    <property type="entry name" value="NA(+)_H(+) ANTIPORTER NHAA"/>
    <property type="match status" value="1"/>
</dbReference>
<dbReference type="PANTHER" id="PTHR30341">
    <property type="entry name" value="SODIUM ION/PROTON ANTIPORTER NHAA-RELATED"/>
    <property type="match status" value="1"/>
</dbReference>
<dbReference type="Pfam" id="PF06965">
    <property type="entry name" value="Na_H_antiport_1"/>
    <property type="match status" value="1"/>
</dbReference>
<sequence>MLTPIQNFLKQEAAGGILLFIFATLAIILANTPLSYLYFDFLQTPVSVQIGAFIINKPLLMWVNDGLMAVFFMLVGMEVKRELLEGSLSSYQRAVFPAIAATGGMVVPAIVFLVFNATHPEFQEGWAIPMATDIAFALGVIALLGKRVPLALKIFLLALAIIDDLGAIVVIALFFSHDLSPQAFIFAGIAVAILITMNRLKITALSAYGIVGIILWASVLKSGVHATLAGVIIGFCIPLNGKKGERPLDDFEHTLSPWSAFAILPLFAFCNAGVSLIGMGMDNLTSTLPMGIALGLLLGKPLGIFSFCFVAVKLGIAKLSEGINFKQIFAVSVLCGIGFTMSMFLAGLAFGGESDSENVTALARLGILIGSGFSAVLGY</sequence>
<evidence type="ECO:0000255" key="1">
    <source>
        <dbReference type="HAMAP-Rule" id="MF_01844"/>
    </source>
</evidence>
<proteinExistence type="inferred from homology"/>
<protein>
    <recommendedName>
        <fullName evidence="1">Na(+)/H(+) antiporter NhaA</fullName>
    </recommendedName>
    <alternativeName>
        <fullName evidence="1">Sodium/proton antiporter NhaA</fullName>
    </alternativeName>
</protein>
<name>NHAA_PASMU</name>
<gene>
    <name evidence="1" type="primary">nhaA</name>
    <name type="ordered locus">PM1684</name>
</gene>
<organism>
    <name type="scientific">Pasteurella multocida (strain Pm70)</name>
    <dbReference type="NCBI Taxonomy" id="272843"/>
    <lineage>
        <taxon>Bacteria</taxon>
        <taxon>Pseudomonadati</taxon>
        <taxon>Pseudomonadota</taxon>
        <taxon>Gammaproteobacteria</taxon>
        <taxon>Pasteurellales</taxon>
        <taxon>Pasteurellaceae</taxon>
        <taxon>Pasteurella</taxon>
    </lineage>
</organism>
<comment type="function">
    <text evidence="1">Na(+)/H(+) antiporter that extrudes sodium in exchange for external protons.</text>
</comment>
<comment type="catalytic activity">
    <reaction evidence="1">
        <text>Na(+)(in) + 2 H(+)(out) = Na(+)(out) + 2 H(+)(in)</text>
        <dbReference type="Rhea" id="RHEA:29251"/>
        <dbReference type="ChEBI" id="CHEBI:15378"/>
        <dbReference type="ChEBI" id="CHEBI:29101"/>
    </reaction>
    <physiologicalReaction direction="left-to-right" evidence="1">
        <dbReference type="Rhea" id="RHEA:29252"/>
    </physiologicalReaction>
</comment>
<comment type="subcellular location">
    <subcellularLocation>
        <location evidence="1">Cell inner membrane</location>
        <topology evidence="1">Multi-pass membrane protein</topology>
    </subcellularLocation>
</comment>
<comment type="similarity">
    <text evidence="1">Belongs to the NhaA Na(+)/H(+) (TC 2.A.33) antiporter family.</text>
</comment>
<reference key="1">
    <citation type="journal article" date="2001" name="Proc. Natl. Acad. Sci. U.S.A.">
        <title>Complete genomic sequence of Pasteurella multocida Pm70.</title>
        <authorList>
            <person name="May B.J."/>
            <person name="Zhang Q."/>
            <person name="Li L.L."/>
            <person name="Paustian M.L."/>
            <person name="Whittam T.S."/>
            <person name="Kapur V."/>
        </authorList>
    </citation>
    <scope>NUCLEOTIDE SEQUENCE [LARGE SCALE GENOMIC DNA]</scope>
    <source>
        <strain>Pm70</strain>
    </source>
</reference>
<feature type="chain" id="PRO_0000334355" description="Na(+)/H(+) antiporter NhaA">
    <location>
        <begin position="1"/>
        <end position="379"/>
    </location>
</feature>
<feature type="transmembrane region" description="Helical" evidence="1">
    <location>
        <begin position="14"/>
        <end position="34"/>
    </location>
</feature>
<feature type="transmembrane region" description="Helical" evidence="1">
    <location>
        <begin position="59"/>
        <end position="79"/>
    </location>
</feature>
<feature type="transmembrane region" description="Helical" evidence="1">
    <location>
        <begin position="95"/>
        <end position="115"/>
    </location>
</feature>
<feature type="transmembrane region" description="Helical" evidence="1">
    <location>
        <begin position="125"/>
        <end position="145"/>
    </location>
</feature>
<feature type="transmembrane region" description="Helical" evidence="1">
    <location>
        <begin position="154"/>
        <end position="174"/>
    </location>
</feature>
<feature type="transmembrane region" description="Helical" evidence="1">
    <location>
        <begin position="175"/>
        <end position="195"/>
    </location>
</feature>
<feature type="transmembrane region" description="Helical" evidence="1">
    <location>
        <begin position="200"/>
        <end position="220"/>
    </location>
</feature>
<feature type="transmembrane region" description="Helical" evidence="1">
    <location>
        <begin position="221"/>
        <end position="241"/>
    </location>
</feature>
<feature type="transmembrane region" description="Helical" evidence="1">
    <location>
        <begin position="261"/>
        <end position="281"/>
    </location>
</feature>
<feature type="transmembrane region" description="Helical" evidence="1">
    <location>
        <begin position="292"/>
        <end position="312"/>
    </location>
</feature>
<feature type="transmembrane region" description="Helical" evidence="1">
    <location>
        <begin position="328"/>
        <end position="348"/>
    </location>
</feature>
<feature type="transmembrane region" description="Helical" evidence="1">
    <location>
        <begin position="359"/>
        <end position="379"/>
    </location>
</feature>
<keyword id="KW-0050">Antiport</keyword>
<keyword id="KW-0997">Cell inner membrane</keyword>
<keyword id="KW-1003">Cell membrane</keyword>
<keyword id="KW-0406">Ion transport</keyword>
<keyword id="KW-0472">Membrane</keyword>
<keyword id="KW-1185">Reference proteome</keyword>
<keyword id="KW-0915">Sodium</keyword>
<keyword id="KW-0739">Sodium transport</keyword>
<keyword id="KW-0812">Transmembrane</keyword>
<keyword id="KW-1133">Transmembrane helix</keyword>
<keyword id="KW-0813">Transport</keyword>